<name>VP26A_ARATH</name>
<sequence>MNYLLGAFKPACNISITFTDGKNRKQVPTKKDNGQIVMNPLFQSQETIAGKINIEPYQGKKVEHNGVKVELLGQIEMYFDRGNFYDFTSLVREIDVPGEIYERKTYPFEFSSVEMPYETYNGVNVRLRYVLKVTVTRGYAGSIVEYQDFVVRNYVPLPPINNSIKMEVGIEDCLHIEFEYNKSKYHLKDVILGKIYFLLVRIKIKNMDLEIRRRESTGAGANTHVETETLAKFELMDGAPVRGESIPVRVFLTPYDLTPTHKNINNKFSVKYYLNLVLVDEEDRRYFKQQEITLYRLKEETS</sequence>
<comment type="function">
    <text>Plays a role in vesicular protein sorting. Component of the membrane-associated retromer complex which is essential in endosome-to-Golgi retrograde transport. The VPS29-VPS26-VPS35 subcomplex may be involved in recycling of specific cargos from endosome to the plasma membrane.</text>
</comment>
<comment type="subunit">
    <text>Component of the retromer complex which consists of VPS29 (MAG1), VPS26 (VPS26A or VPS26B), VPS35 (VPS35A or VPS35B or VPS35C), VPS5/17 (SNX1 or SNX2A or SNX2B). Component of a retromer subcomplex consisting of VPS29 (MAG1), VPS26 (VPS26A or VPS26B), VPS35 (VPS35A or VPS35B or VPS35C).</text>
</comment>
<comment type="subcellular location">
    <subcellularLocation>
        <location evidence="2">Cytoplasm</location>
    </subcellularLocation>
    <subcellularLocation>
        <location evidence="2">Endosome membrane</location>
        <topology evidence="2">Peripheral membrane protein</topology>
        <orientation evidence="2">Cytoplasmic side</orientation>
    </subcellularLocation>
    <subcellularLocation>
        <location evidence="2">Prevacuolar compartment membrane</location>
        <topology evidence="2">Peripheral membrane protein</topology>
        <orientation evidence="2">Cytoplasmic side</orientation>
    </subcellularLocation>
    <subcellularLocation>
        <location evidence="1">Golgi apparatus</location>
        <location evidence="1">trans-Golgi network membrane</location>
        <topology evidence="1">Peripheral membrane protein</topology>
        <orientation evidence="1">Cytoplasmic side</orientation>
    </subcellularLocation>
</comment>
<comment type="similarity">
    <text evidence="3">Belongs to the VPS26 family.</text>
</comment>
<proteinExistence type="evidence at transcript level"/>
<accession>Q9FJD0</accession>
<keyword id="KW-0963">Cytoplasm</keyword>
<keyword id="KW-0967">Endosome</keyword>
<keyword id="KW-0333">Golgi apparatus</keyword>
<keyword id="KW-0472">Membrane</keyword>
<keyword id="KW-0653">Protein transport</keyword>
<keyword id="KW-1185">Reference proteome</keyword>
<keyword id="KW-0813">Transport</keyword>
<dbReference type="EMBL" id="AB015476">
    <property type="protein sequence ID" value="BAB09729.1"/>
    <property type="molecule type" value="Genomic_DNA"/>
</dbReference>
<dbReference type="EMBL" id="CP002688">
    <property type="protein sequence ID" value="AED96373.1"/>
    <property type="molecule type" value="Genomic_DNA"/>
</dbReference>
<dbReference type="EMBL" id="AK227917">
    <property type="protein sequence ID" value="BAE99887.1"/>
    <property type="molecule type" value="mRNA"/>
</dbReference>
<dbReference type="RefSeq" id="NP_200165.1">
    <property type="nucleotide sequence ID" value="NM_124733.4"/>
</dbReference>
<dbReference type="SMR" id="Q9FJD0"/>
<dbReference type="BioGRID" id="20679">
    <property type="interactions" value="5"/>
</dbReference>
<dbReference type="FunCoup" id="Q9FJD0">
    <property type="interactions" value="4604"/>
</dbReference>
<dbReference type="IntAct" id="Q9FJD0">
    <property type="interactions" value="2"/>
</dbReference>
<dbReference type="STRING" id="3702.Q9FJD0"/>
<dbReference type="iPTMnet" id="Q9FJD0"/>
<dbReference type="PaxDb" id="3702-AT5G53530.1"/>
<dbReference type="ProteomicsDB" id="242621"/>
<dbReference type="EnsemblPlants" id="AT5G53530.1">
    <property type="protein sequence ID" value="AT5G53530.1"/>
    <property type="gene ID" value="AT5G53530"/>
</dbReference>
<dbReference type="GeneID" id="835435"/>
<dbReference type="Gramene" id="AT5G53530.1">
    <property type="protein sequence ID" value="AT5G53530.1"/>
    <property type="gene ID" value="AT5G53530"/>
</dbReference>
<dbReference type="KEGG" id="ath:AT5G53530"/>
<dbReference type="Araport" id="AT5G53530"/>
<dbReference type="TAIR" id="AT5G53530">
    <property type="gene designation" value="VPS26A"/>
</dbReference>
<dbReference type="eggNOG" id="KOG3063">
    <property type="taxonomic scope" value="Eukaryota"/>
</dbReference>
<dbReference type="HOGENOM" id="CLU_031077_3_1_1"/>
<dbReference type="InParanoid" id="Q9FJD0"/>
<dbReference type="OMA" id="AGKVCIE"/>
<dbReference type="OrthoDB" id="3821113at2759"/>
<dbReference type="PhylomeDB" id="Q9FJD0"/>
<dbReference type="PRO" id="PR:Q9FJD0"/>
<dbReference type="Proteomes" id="UP000006548">
    <property type="component" value="Chromosome 5"/>
</dbReference>
<dbReference type="ExpressionAtlas" id="Q9FJD0">
    <property type="expression patterns" value="baseline and differential"/>
</dbReference>
<dbReference type="GO" id="GO:0010008">
    <property type="term" value="C:endosome membrane"/>
    <property type="evidence" value="ECO:0007669"/>
    <property type="project" value="UniProtKB-SubCell"/>
</dbReference>
<dbReference type="GO" id="GO:0005794">
    <property type="term" value="C:Golgi apparatus"/>
    <property type="evidence" value="ECO:0007669"/>
    <property type="project" value="UniProtKB-SubCell"/>
</dbReference>
<dbReference type="GO" id="GO:0043231">
    <property type="term" value="C:intracellular membrane-bounded organelle"/>
    <property type="evidence" value="ECO:0000314"/>
    <property type="project" value="TAIR"/>
</dbReference>
<dbReference type="GO" id="GO:0016020">
    <property type="term" value="C:membrane"/>
    <property type="evidence" value="ECO:0000314"/>
    <property type="project" value="TAIR"/>
</dbReference>
<dbReference type="GO" id="GO:0005771">
    <property type="term" value="C:multivesicular body"/>
    <property type="evidence" value="ECO:0000314"/>
    <property type="project" value="TAIR"/>
</dbReference>
<dbReference type="GO" id="GO:0030904">
    <property type="term" value="C:retromer complex"/>
    <property type="evidence" value="ECO:0000314"/>
    <property type="project" value="TAIR"/>
</dbReference>
<dbReference type="GO" id="GO:0006886">
    <property type="term" value="P:intracellular protein transport"/>
    <property type="evidence" value="ECO:0007669"/>
    <property type="project" value="InterPro"/>
</dbReference>
<dbReference type="FunFam" id="2.60.40.640:FF:000006">
    <property type="entry name" value="Vacuolar protein sorting-associated protein 26"/>
    <property type="match status" value="1"/>
</dbReference>
<dbReference type="FunFam" id="2.60.40.640:FF:000012">
    <property type="entry name" value="vacuolar protein sorting-associated protein 26A"/>
    <property type="match status" value="1"/>
</dbReference>
<dbReference type="Gene3D" id="2.60.40.640">
    <property type="match status" value="2"/>
</dbReference>
<dbReference type="InterPro" id="IPR014752">
    <property type="entry name" value="Arrestin-like_C"/>
</dbReference>
<dbReference type="InterPro" id="IPR028934">
    <property type="entry name" value="Vps26-related"/>
</dbReference>
<dbReference type="PANTHER" id="PTHR12233">
    <property type="entry name" value="VACUOLAR PROTEIN SORTING 26 RELATED"/>
    <property type="match status" value="1"/>
</dbReference>
<dbReference type="Pfam" id="PF03643">
    <property type="entry name" value="Vps26"/>
    <property type="match status" value="1"/>
</dbReference>
<protein>
    <recommendedName>
        <fullName>Vacuolar protein sorting-associated protein 26A</fullName>
    </recommendedName>
    <alternativeName>
        <fullName>Vesicle protein sorting 26A</fullName>
    </alternativeName>
</protein>
<evidence type="ECO:0000250" key="1"/>
<evidence type="ECO:0000269" key="2">
    <source>
    </source>
</evidence>
<evidence type="ECO:0000305" key="3"/>
<feature type="chain" id="PRO_0000414722" description="Vacuolar protein sorting-associated protein 26A">
    <location>
        <begin position="1"/>
        <end position="302"/>
    </location>
</feature>
<organism>
    <name type="scientific">Arabidopsis thaliana</name>
    <name type="common">Mouse-ear cress</name>
    <dbReference type="NCBI Taxonomy" id="3702"/>
    <lineage>
        <taxon>Eukaryota</taxon>
        <taxon>Viridiplantae</taxon>
        <taxon>Streptophyta</taxon>
        <taxon>Embryophyta</taxon>
        <taxon>Tracheophyta</taxon>
        <taxon>Spermatophyta</taxon>
        <taxon>Magnoliopsida</taxon>
        <taxon>eudicotyledons</taxon>
        <taxon>Gunneridae</taxon>
        <taxon>Pentapetalae</taxon>
        <taxon>rosids</taxon>
        <taxon>malvids</taxon>
        <taxon>Brassicales</taxon>
        <taxon>Brassicaceae</taxon>
        <taxon>Camelineae</taxon>
        <taxon>Arabidopsis</taxon>
    </lineage>
</organism>
<gene>
    <name type="primary">VPS26A</name>
    <name type="ordered locus">At5g53530</name>
    <name type="ORF">MNC6.7</name>
</gene>
<reference key="1">
    <citation type="journal article" date="1998" name="DNA Res.">
        <title>Structural analysis of Arabidopsis thaliana chromosome 5. VII. Sequence features of the regions of 1,013,767 bp covered by sixteen physically assigned P1 and TAC clones.</title>
        <authorList>
            <person name="Nakamura Y."/>
            <person name="Sato S."/>
            <person name="Asamizu E."/>
            <person name="Kaneko T."/>
            <person name="Kotani H."/>
            <person name="Miyajima N."/>
            <person name="Tabata S."/>
        </authorList>
    </citation>
    <scope>NUCLEOTIDE SEQUENCE [LARGE SCALE GENOMIC DNA]</scope>
    <source>
        <strain>cv. Columbia</strain>
    </source>
</reference>
<reference key="2">
    <citation type="journal article" date="2017" name="Plant J.">
        <title>Araport11: a complete reannotation of the Arabidopsis thaliana reference genome.</title>
        <authorList>
            <person name="Cheng C.Y."/>
            <person name="Krishnakumar V."/>
            <person name="Chan A.P."/>
            <person name="Thibaud-Nissen F."/>
            <person name="Schobel S."/>
            <person name="Town C.D."/>
        </authorList>
    </citation>
    <scope>GENOME REANNOTATION</scope>
    <source>
        <strain>cv. Columbia</strain>
    </source>
</reference>
<reference key="3">
    <citation type="submission" date="2006-07" db="EMBL/GenBank/DDBJ databases">
        <title>Large-scale analysis of RIKEN Arabidopsis full-length (RAFL) cDNAs.</title>
        <authorList>
            <person name="Totoki Y."/>
            <person name="Seki M."/>
            <person name="Ishida J."/>
            <person name="Nakajima M."/>
            <person name="Enju A."/>
            <person name="Kamiya A."/>
            <person name="Narusaka M."/>
            <person name="Shin-i T."/>
            <person name="Nakagawa M."/>
            <person name="Sakamoto N."/>
            <person name="Oishi K."/>
            <person name="Kohara Y."/>
            <person name="Kobayashi M."/>
            <person name="Toyoda A."/>
            <person name="Sakaki Y."/>
            <person name="Sakurai T."/>
            <person name="Iida K."/>
            <person name="Akiyama K."/>
            <person name="Satou M."/>
            <person name="Toyoda T."/>
            <person name="Konagaya A."/>
            <person name="Carninci P."/>
            <person name="Kawai J."/>
            <person name="Hayashizaki Y."/>
            <person name="Shinozaki K."/>
        </authorList>
    </citation>
    <scope>NUCLEOTIDE SEQUENCE [LARGE SCALE MRNA]</scope>
    <source>
        <strain>cv. Columbia</strain>
    </source>
</reference>
<reference key="4">
    <citation type="journal article" date="2006" name="Plant Cell">
        <title>Plant retromer, localized to the prevacuolar compartment and microvesicles in Arabidopsis, may interact with vacuolar sorting receptors.</title>
        <authorList>
            <person name="Oliviusson P."/>
            <person name="Heinzerling O."/>
            <person name="Hillmer S."/>
            <person name="Hinz G."/>
            <person name="Tse Y.C."/>
            <person name="Jiang L."/>
            <person name="Robinson D.G."/>
        </authorList>
    </citation>
    <scope>COMPONENT OF THE RETROMER COMPLEX</scope>
    <scope>SUBCELLULAR LOCATION</scope>
</reference>